<dbReference type="EMBL" id="AE006468">
    <property type="protein sequence ID" value="AAL19050.1"/>
    <property type="molecule type" value="Genomic_DNA"/>
</dbReference>
<dbReference type="RefSeq" id="NP_459091.1">
    <property type="nucleotide sequence ID" value="NC_003197.2"/>
</dbReference>
<dbReference type="RefSeq" id="WP_000377155.1">
    <property type="nucleotide sequence ID" value="NC_003197.2"/>
</dbReference>
<dbReference type="SMR" id="Q8ZRW2"/>
<dbReference type="STRING" id="99287.STM0086"/>
<dbReference type="PaxDb" id="99287-STM0086"/>
<dbReference type="GeneID" id="1251604"/>
<dbReference type="KEGG" id="stm:STM0086"/>
<dbReference type="PATRIC" id="fig|99287.12.peg.89"/>
<dbReference type="HOGENOM" id="CLU_005126_9_3_6"/>
<dbReference type="OMA" id="TFIGANQ"/>
<dbReference type="PhylomeDB" id="Q8ZRW2"/>
<dbReference type="BioCyc" id="SENT99287:STM0086-MONOMER"/>
<dbReference type="Proteomes" id="UP000001014">
    <property type="component" value="Chromosome"/>
</dbReference>
<dbReference type="GO" id="GO:0005886">
    <property type="term" value="C:plasma membrane"/>
    <property type="evidence" value="ECO:0000318"/>
    <property type="project" value="GO_Central"/>
</dbReference>
<dbReference type="GO" id="GO:0019899">
    <property type="term" value="F:enzyme binding"/>
    <property type="evidence" value="ECO:0007669"/>
    <property type="project" value="InterPro"/>
</dbReference>
<dbReference type="GO" id="GO:0015503">
    <property type="term" value="F:glutathione-regulated potassium exporter activity"/>
    <property type="evidence" value="ECO:0007669"/>
    <property type="project" value="UniProtKB-UniRule"/>
</dbReference>
<dbReference type="GO" id="GO:0015643">
    <property type="term" value="F:toxic substance binding"/>
    <property type="evidence" value="ECO:0007669"/>
    <property type="project" value="InterPro"/>
</dbReference>
<dbReference type="GO" id="GO:1902600">
    <property type="term" value="P:proton transmembrane transport"/>
    <property type="evidence" value="ECO:0007669"/>
    <property type="project" value="InterPro"/>
</dbReference>
<dbReference type="GO" id="GO:0051595">
    <property type="term" value="P:response to methylglyoxal"/>
    <property type="evidence" value="ECO:0007669"/>
    <property type="project" value="InterPro"/>
</dbReference>
<dbReference type="FunFam" id="1.20.1530.20:FF:000001">
    <property type="entry name" value="Glutathione-regulated potassium-efflux system protein KefB"/>
    <property type="match status" value="1"/>
</dbReference>
<dbReference type="FunFam" id="3.40.50.720:FF:000036">
    <property type="entry name" value="Glutathione-regulated potassium-efflux system protein KefB"/>
    <property type="match status" value="1"/>
</dbReference>
<dbReference type="Gene3D" id="1.20.1530.20">
    <property type="match status" value="1"/>
</dbReference>
<dbReference type="Gene3D" id="3.40.50.720">
    <property type="entry name" value="NAD(P)-binding Rossmann-like Domain"/>
    <property type="match status" value="1"/>
</dbReference>
<dbReference type="HAMAP" id="MF_01413">
    <property type="entry name" value="K_H_efflux_KefC"/>
    <property type="match status" value="1"/>
</dbReference>
<dbReference type="InterPro" id="IPR006153">
    <property type="entry name" value="Cation/H_exchanger_TM"/>
</dbReference>
<dbReference type="InterPro" id="IPR004771">
    <property type="entry name" value="K/H_exchanger"/>
</dbReference>
<dbReference type="InterPro" id="IPR023941">
    <property type="entry name" value="K_H_efflux_KefC"/>
</dbReference>
<dbReference type="InterPro" id="IPR006036">
    <property type="entry name" value="K_uptake_TrkA"/>
</dbReference>
<dbReference type="InterPro" id="IPR038770">
    <property type="entry name" value="Na+/solute_symporter_sf"/>
</dbReference>
<dbReference type="InterPro" id="IPR036291">
    <property type="entry name" value="NAD(P)-bd_dom_sf"/>
</dbReference>
<dbReference type="InterPro" id="IPR003148">
    <property type="entry name" value="RCK_N"/>
</dbReference>
<dbReference type="NCBIfam" id="TIGR00932">
    <property type="entry name" value="2a37"/>
    <property type="match status" value="1"/>
</dbReference>
<dbReference type="NCBIfam" id="NF002924">
    <property type="entry name" value="PRK03562.1"/>
    <property type="match status" value="1"/>
</dbReference>
<dbReference type="PANTHER" id="PTHR46157:SF3">
    <property type="entry name" value="GLUTATHIONE-REGULATED POTASSIUM-EFFLUX SYSTEM PROTEIN KEFC"/>
    <property type="match status" value="1"/>
</dbReference>
<dbReference type="PANTHER" id="PTHR46157">
    <property type="entry name" value="K(+) EFFLUX ANTIPORTER 3, CHLOROPLASTIC"/>
    <property type="match status" value="1"/>
</dbReference>
<dbReference type="Pfam" id="PF00999">
    <property type="entry name" value="Na_H_Exchanger"/>
    <property type="match status" value="1"/>
</dbReference>
<dbReference type="Pfam" id="PF02254">
    <property type="entry name" value="TrkA_N"/>
    <property type="match status" value="1"/>
</dbReference>
<dbReference type="PRINTS" id="PR00335">
    <property type="entry name" value="KUPTAKETRKA"/>
</dbReference>
<dbReference type="SUPFAM" id="SSF51735">
    <property type="entry name" value="NAD(P)-binding Rossmann-fold domains"/>
    <property type="match status" value="1"/>
</dbReference>
<dbReference type="PROSITE" id="PS51201">
    <property type="entry name" value="RCK_N"/>
    <property type="match status" value="1"/>
</dbReference>
<sequence>MDSHTLLQALIYLGSAALIVPIAVRLGLGSVLGYLIAGCIIGPWGLRLVTDAESILHFAEIGVVLMLFVIGLELDPQRLWKLRASVFGGGALQMGVCGGLIGLFCMFLGLRWQVAELIGMTLALSSTAIAMQAMNERNLTVSQVGRSAFAVLLFQDIAAIPLVAMIPLLAASGASTTLGAFALSALKVAGALALVVLLGRYVTRPALRFVARSGLREVFSAVALFLVFGFGLLLEEVGLSMAMGAFLAGVLLASSEYRHALESDIEPFKGLLLGLFFIGVGMSIDFGTLVENPLRILLLLAGFLAIKIVMLWLVARPLGVPAKQRRWFAVLLGQGSEFAFVVFGAAQMADVLEPEWAKALTLAVALSMAATPIFLVLLTRMEKTATGEAREADEIDEEQPRVIVAGFGRFGQIAGRLLLSSGVKMVVLDHDPDHIETLRKFGMKVFYGDATRMDLLESAGAAKAEVLINAIDDPQTNLQLSELVKSHFPHLQIIARARDVDHYIRLRQAGVAMPERETFEGALKSGRQALEALGLGRYEARERADLFRHFNTRMVEEMAKGENDPLSRAAAYKRTSAMLSEIITEDREHLSLIQRHGWQGTAEGKHSGEVADEPEVKPSI</sequence>
<accession>Q8ZRW2</accession>
<protein>
    <recommendedName>
        <fullName evidence="2">Glutathione-regulated potassium-efflux system protein KefC</fullName>
    </recommendedName>
    <alternativeName>
        <fullName evidence="2">K(+)/H(+) antiporter</fullName>
    </alternativeName>
</protein>
<feature type="chain" id="PRO_0000196612" description="Glutathione-regulated potassium-efflux system protein KefC">
    <location>
        <begin position="1"/>
        <end position="620"/>
    </location>
</feature>
<feature type="topological domain" description="Periplasmic" evidence="1">
    <location>
        <begin position="1"/>
        <end position="3"/>
    </location>
</feature>
<feature type="transmembrane region" description="Helical" evidence="2">
    <location>
        <begin position="4"/>
        <end position="24"/>
    </location>
</feature>
<feature type="topological domain" description="Cytoplasmic" evidence="1">
    <location>
        <position position="25"/>
    </location>
</feature>
<feature type="transmembrane region" description="Helical" evidence="2">
    <location>
        <begin position="26"/>
        <end position="46"/>
    </location>
</feature>
<feature type="topological domain" description="Periplasmic" evidence="1">
    <location>
        <begin position="47"/>
        <end position="53"/>
    </location>
</feature>
<feature type="transmembrane region" description="Helical" evidence="2">
    <location>
        <begin position="54"/>
        <end position="74"/>
    </location>
</feature>
<feature type="topological domain" description="Cytoplasmic" evidence="1">
    <location>
        <begin position="75"/>
        <end position="89"/>
    </location>
</feature>
<feature type="transmembrane region" description="Helical" evidence="2">
    <location>
        <begin position="90"/>
        <end position="110"/>
    </location>
</feature>
<feature type="topological domain" description="Periplasmic" evidence="1">
    <location>
        <begin position="111"/>
        <end position="113"/>
    </location>
</feature>
<feature type="transmembrane region" description="Helical" evidence="2">
    <location>
        <begin position="114"/>
        <end position="134"/>
    </location>
</feature>
<feature type="topological domain" description="Cytoplasmic" evidence="1">
    <location>
        <begin position="135"/>
        <end position="148"/>
    </location>
</feature>
<feature type="transmembrane region" description="Helical" evidence="2">
    <location>
        <begin position="149"/>
        <end position="169"/>
    </location>
</feature>
<feature type="topological domain" description="Periplasmic" evidence="1">
    <location>
        <begin position="170"/>
        <end position="177"/>
    </location>
</feature>
<feature type="transmembrane region" description="Helical" evidence="2">
    <location>
        <begin position="178"/>
        <end position="198"/>
    </location>
</feature>
<feature type="topological domain" description="Cytoplasmic" evidence="1">
    <location>
        <begin position="199"/>
        <end position="213"/>
    </location>
</feature>
<feature type="transmembrane region" description="Helical" evidence="2">
    <location>
        <begin position="214"/>
        <end position="233"/>
    </location>
</feature>
<feature type="topological domain" description="Periplasmic" evidence="1">
    <location>
        <begin position="234"/>
        <end position="236"/>
    </location>
</feature>
<feature type="transmembrane region" description="Helical" evidence="2">
    <location>
        <begin position="237"/>
        <end position="254"/>
    </location>
</feature>
<feature type="topological domain" description="Cytoplasmic" evidence="1">
    <location>
        <begin position="255"/>
        <end position="269"/>
    </location>
</feature>
<feature type="transmembrane region" description="Helical" evidence="2">
    <location>
        <begin position="270"/>
        <end position="290"/>
    </location>
</feature>
<feature type="topological domain" description="Periplasmic" evidence="1">
    <location>
        <begin position="291"/>
        <end position="293"/>
    </location>
</feature>
<feature type="transmembrane region" description="Helical" evidence="2">
    <location>
        <begin position="294"/>
        <end position="314"/>
    </location>
</feature>
<feature type="topological domain" description="Cytoplasmic" evidence="1">
    <location>
        <begin position="315"/>
        <end position="326"/>
    </location>
</feature>
<feature type="transmembrane region" description="Helical" evidence="2">
    <location>
        <begin position="327"/>
        <end position="347"/>
    </location>
</feature>
<feature type="topological domain" description="Periplasmic" evidence="1">
    <location>
        <begin position="348"/>
        <end position="358"/>
    </location>
</feature>
<feature type="transmembrane region" description="Helical" evidence="2">
    <location>
        <begin position="359"/>
        <end position="379"/>
    </location>
</feature>
<feature type="topological domain" description="Cytoplasmic" evidence="1">
    <location>
        <begin position="380"/>
        <end position="620"/>
    </location>
</feature>
<feature type="domain" description="RCK N-terminal" evidence="3">
    <location>
        <begin position="399"/>
        <end position="518"/>
    </location>
</feature>
<feature type="region of interest" description="Disordered" evidence="4">
    <location>
        <begin position="599"/>
        <end position="620"/>
    </location>
</feature>
<reference key="1">
    <citation type="journal article" date="2001" name="Nature">
        <title>Complete genome sequence of Salmonella enterica serovar Typhimurium LT2.</title>
        <authorList>
            <person name="McClelland M."/>
            <person name="Sanderson K.E."/>
            <person name="Spieth J."/>
            <person name="Clifton S.W."/>
            <person name="Latreille P."/>
            <person name="Courtney L."/>
            <person name="Porwollik S."/>
            <person name="Ali J."/>
            <person name="Dante M."/>
            <person name="Du F."/>
            <person name="Hou S."/>
            <person name="Layman D."/>
            <person name="Leonard S."/>
            <person name="Nguyen C."/>
            <person name="Scott K."/>
            <person name="Holmes A."/>
            <person name="Grewal N."/>
            <person name="Mulvaney E."/>
            <person name="Ryan E."/>
            <person name="Sun H."/>
            <person name="Florea L."/>
            <person name="Miller W."/>
            <person name="Stoneking T."/>
            <person name="Nhan M."/>
            <person name="Waterston R."/>
            <person name="Wilson R.K."/>
        </authorList>
    </citation>
    <scope>NUCLEOTIDE SEQUENCE [LARGE SCALE GENOMIC DNA]</scope>
    <source>
        <strain>LT2 / SGSC1412 / ATCC 700720</strain>
    </source>
</reference>
<gene>
    <name evidence="2" type="primary">kefC</name>
    <name type="ordered locus">STM0086</name>
</gene>
<comment type="function">
    <text evidence="2">Pore-forming subunit of a potassium efflux system that confers protection against electrophiles. Catalyzes K(+)/H(+) antiport.</text>
</comment>
<comment type="subunit">
    <text evidence="2">Homodimer. Interacts with the regulatory subunit KefF.</text>
</comment>
<comment type="subcellular location">
    <subcellularLocation>
        <location evidence="2">Cell inner membrane</location>
        <topology evidence="2">Multi-pass membrane protein</topology>
    </subcellularLocation>
</comment>
<comment type="similarity">
    <text evidence="2">Belongs to the monovalent cation:proton antiporter 2 (CPA2) transporter (TC 2.A.37) family. KefC subfamily.</text>
</comment>
<keyword id="KW-0050">Antiport</keyword>
<keyword id="KW-0997">Cell inner membrane</keyword>
<keyword id="KW-1003">Cell membrane</keyword>
<keyword id="KW-0406">Ion transport</keyword>
<keyword id="KW-0472">Membrane</keyword>
<keyword id="KW-0630">Potassium</keyword>
<keyword id="KW-0633">Potassium transport</keyword>
<keyword id="KW-1185">Reference proteome</keyword>
<keyword id="KW-0812">Transmembrane</keyword>
<keyword id="KW-1133">Transmembrane helix</keyword>
<keyword id="KW-0813">Transport</keyword>
<proteinExistence type="inferred from homology"/>
<evidence type="ECO:0000255" key="1"/>
<evidence type="ECO:0000255" key="2">
    <source>
        <dbReference type="HAMAP-Rule" id="MF_01413"/>
    </source>
</evidence>
<evidence type="ECO:0000255" key="3">
    <source>
        <dbReference type="PROSITE-ProRule" id="PRU00543"/>
    </source>
</evidence>
<evidence type="ECO:0000256" key="4">
    <source>
        <dbReference type="SAM" id="MobiDB-lite"/>
    </source>
</evidence>
<name>KEFC_SALTY</name>
<organism>
    <name type="scientific">Salmonella typhimurium (strain LT2 / SGSC1412 / ATCC 700720)</name>
    <dbReference type="NCBI Taxonomy" id="99287"/>
    <lineage>
        <taxon>Bacteria</taxon>
        <taxon>Pseudomonadati</taxon>
        <taxon>Pseudomonadota</taxon>
        <taxon>Gammaproteobacteria</taxon>
        <taxon>Enterobacterales</taxon>
        <taxon>Enterobacteriaceae</taxon>
        <taxon>Salmonella</taxon>
    </lineage>
</organism>